<sequence>MKGKFISFEGIDGCGKTTQIKFLEEYLLKQGYNILVLREPGGTKVGEKVRDILLDKNNFISPVTEMLLYASSRAQLVEEKILPAIEEGKIVLLDRFVDSSYVYQGYARGLGIEKVKVVNEIATMGILPDVTIYIDITPEEAMKRRGKREADRLERESWDFHKKVREGYIKLVKEFPKRFVFIDGMQELMKVHKDIIDVVKKYL</sequence>
<organism>
    <name type="scientific">Thermoanaerobacter pseudethanolicus (strain ATCC 33223 / 39E)</name>
    <name type="common">Clostridium thermohydrosulfuricum</name>
    <dbReference type="NCBI Taxonomy" id="340099"/>
    <lineage>
        <taxon>Bacteria</taxon>
        <taxon>Bacillati</taxon>
        <taxon>Bacillota</taxon>
        <taxon>Clostridia</taxon>
        <taxon>Thermoanaerobacterales</taxon>
        <taxon>Thermoanaerobacteraceae</taxon>
        <taxon>Thermoanaerobacter</taxon>
    </lineage>
</organism>
<accession>B0K7K7</accession>
<proteinExistence type="inferred from homology"/>
<comment type="function">
    <text evidence="1">Phosphorylation of dTMP to form dTDP in both de novo and salvage pathways of dTTP synthesis.</text>
</comment>
<comment type="catalytic activity">
    <reaction evidence="1">
        <text>dTMP + ATP = dTDP + ADP</text>
        <dbReference type="Rhea" id="RHEA:13517"/>
        <dbReference type="ChEBI" id="CHEBI:30616"/>
        <dbReference type="ChEBI" id="CHEBI:58369"/>
        <dbReference type="ChEBI" id="CHEBI:63528"/>
        <dbReference type="ChEBI" id="CHEBI:456216"/>
        <dbReference type="EC" id="2.7.4.9"/>
    </reaction>
</comment>
<comment type="similarity">
    <text evidence="1">Belongs to the thymidylate kinase family.</text>
</comment>
<dbReference type="EC" id="2.7.4.9" evidence="1"/>
<dbReference type="EMBL" id="CP000924">
    <property type="protein sequence ID" value="ABY95773.1"/>
    <property type="molecule type" value="Genomic_DNA"/>
</dbReference>
<dbReference type="RefSeq" id="WP_003867356.1">
    <property type="nucleotide sequence ID" value="NC_010321.1"/>
</dbReference>
<dbReference type="SMR" id="B0K7K7"/>
<dbReference type="STRING" id="340099.Teth39_2150"/>
<dbReference type="KEGG" id="tpd:Teth39_2150"/>
<dbReference type="eggNOG" id="COG0125">
    <property type="taxonomic scope" value="Bacteria"/>
</dbReference>
<dbReference type="HOGENOM" id="CLU_049131_0_2_9"/>
<dbReference type="Proteomes" id="UP000002156">
    <property type="component" value="Chromosome"/>
</dbReference>
<dbReference type="GO" id="GO:0005829">
    <property type="term" value="C:cytosol"/>
    <property type="evidence" value="ECO:0007669"/>
    <property type="project" value="TreeGrafter"/>
</dbReference>
<dbReference type="GO" id="GO:0005524">
    <property type="term" value="F:ATP binding"/>
    <property type="evidence" value="ECO:0007669"/>
    <property type="project" value="UniProtKB-UniRule"/>
</dbReference>
<dbReference type="GO" id="GO:0004798">
    <property type="term" value="F:dTMP kinase activity"/>
    <property type="evidence" value="ECO:0007669"/>
    <property type="project" value="UniProtKB-UniRule"/>
</dbReference>
<dbReference type="GO" id="GO:0006233">
    <property type="term" value="P:dTDP biosynthetic process"/>
    <property type="evidence" value="ECO:0007669"/>
    <property type="project" value="InterPro"/>
</dbReference>
<dbReference type="GO" id="GO:0006235">
    <property type="term" value="P:dTTP biosynthetic process"/>
    <property type="evidence" value="ECO:0007669"/>
    <property type="project" value="UniProtKB-UniRule"/>
</dbReference>
<dbReference type="GO" id="GO:0006227">
    <property type="term" value="P:dUDP biosynthetic process"/>
    <property type="evidence" value="ECO:0007669"/>
    <property type="project" value="TreeGrafter"/>
</dbReference>
<dbReference type="CDD" id="cd01672">
    <property type="entry name" value="TMPK"/>
    <property type="match status" value="1"/>
</dbReference>
<dbReference type="FunFam" id="3.40.50.300:FF:000225">
    <property type="entry name" value="Thymidylate kinase"/>
    <property type="match status" value="1"/>
</dbReference>
<dbReference type="Gene3D" id="3.40.50.300">
    <property type="entry name" value="P-loop containing nucleotide triphosphate hydrolases"/>
    <property type="match status" value="1"/>
</dbReference>
<dbReference type="HAMAP" id="MF_00165">
    <property type="entry name" value="Thymidylate_kinase"/>
    <property type="match status" value="1"/>
</dbReference>
<dbReference type="InterPro" id="IPR027417">
    <property type="entry name" value="P-loop_NTPase"/>
</dbReference>
<dbReference type="InterPro" id="IPR039430">
    <property type="entry name" value="Thymidylate_kin-like_dom"/>
</dbReference>
<dbReference type="InterPro" id="IPR018095">
    <property type="entry name" value="Thymidylate_kin_CS"/>
</dbReference>
<dbReference type="InterPro" id="IPR018094">
    <property type="entry name" value="Thymidylate_kinase"/>
</dbReference>
<dbReference type="NCBIfam" id="TIGR00041">
    <property type="entry name" value="DTMP_kinase"/>
    <property type="match status" value="1"/>
</dbReference>
<dbReference type="PANTHER" id="PTHR10344">
    <property type="entry name" value="THYMIDYLATE KINASE"/>
    <property type="match status" value="1"/>
</dbReference>
<dbReference type="PANTHER" id="PTHR10344:SF4">
    <property type="entry name" value="UMP-CMP KINASE 2, MITOCHONDRIAL"/>
    <property type="match status" value="1"/>
</dbReference>
<dbReference type="Pfam" id="PF02223">
    <property type="entry name" value="Thymidylate_kin"/>
    <property type="match status" value="1"/>
</dbReference>
<dbReference type="SUPFAM" id="SSF52540">
    <property type="entry name" value="P-loop containing nucleoside triphosphate hydrolases"/>
    <property type="match status" value="1"/>
</dbReference>
<dbReference type="PROSITE" id="PS01331">
    <property type="entry name" value="THYMIDYLATE_KINASE"/>
    <property type="match status" value="1"/>
</dbReference>
<name>KTHY_THEP3</name>
<keyword id="KW-0067">ATP-binding</keyword>
<keyword id="KW-0418">Kinase</keyword>
<keyword id="KW-0545">Nucleotide biosynthesis</keyword>
<keyword id="KW-0547">Nucleotide-binding</keyword>
<keyword id="KW-1185">Reference proteome</keyword>
<keyword id="KW-0808">Transferase</keyword>
<gene>
    <name evidence="1" type="primary">tmk</name>
    <name type="ordered locus">Teth39_2150</name>
</gene>
<reference key="1">
    <citation type="submission" date="2008-01" db="EMBL/GenBank/DDBJ databases">
        <title>Complete sequence of Thermoanaerobacter pseudethanolicus 39E.</title>
        <authorList>
            <person name="Copeland A."/>
            <person name="Lucas S."/>
            <person name="Lapidus A."/>
            <person name="Barry K."/>
            <person name="Glavina del Rio T."/>
            <person name="Dalin E."/>
            <person name="Tice H."/>
            <person name="Pitluck S."/>
            <person name="Bruce D."/>
            <person name="Goodwin L."/>
            <person name="Saunders E."/>
            <person name="Brettin T."/>
            <person name="Detter J.C."/>
            <person name="Han C."/>
            <person name="Schmutz J."/>
            <person name="Larimer F."/>
            <person name="Land M."/>
            <person name="Hauser L."/>
            <person name="Kyrpides N."/>
            <person name="Lykidis A."/>
            <person name="Hemme C."/>
            <person name="Fields M.W."/>
            <person name="He Z."/>
            <person name="Zhou J."/>
            <person name="Richardson P."/>
        </authorList>
    </citation>
    <scope>NUCLEOTIDE SEQUENCE [LARGE SCALE GENOMIC DNA]</scope>
    <source>
        <strain>ATCC 33223 / DSM 2355 / 39E</strain>
    </source>
</reference>
<evidence type="ECO:0000255" key="1">
    <source>
        <dbReference type="HAMAP-Rule" id="MF_00165"/>
    </source>
</evidence>
<protein>
    <recommendedName>
        <fullName evidence="1">Thymidylate kinase</fullName>
        <ecNumber evidence="1">2.7.4.9</ecNumber>
    </recommendedName>
    <alternativeName>
        <fullName evidence="1">dTMP kinase</fullName>
    </alternativeName>
</protein>
<feature type="chain" id="PRO_1000097440" description="Thymidylate kinase">
    <location>
        <begin position="1"/>
        <end position="203"/>
    </location>
</feature>
<feature type="binding site" evidence="1">
    <location>
        <begin position="10"/>
        <end position="17"/>
    </location>
    <ligand>
        <name>ATP</name>
        <dbReference type="ChEBI" id="CHEBI:30616"/>
    </ligand>
</feature>